<sequence>MGKSLIQQRRGKGSPTFRSPSHRFRGAVKYIPLNYTQDKTIRGVVEEIMHDPGRTAPVARVKFENGMEKLIIAPEGLLVGQEIYIGPDAPVEIGNTLPLAKIPEGTYIYNIEGVPGDGGKYVRAGGTYALVVSREKDKVIVQLPSGELKAFDPNCRATIGVVAGGGRLEKPLVKAGKAYYKYKARNKFWPTPRGVKMNAVNHPFGGKEHHPGKPTTTSRRAPPGRKVGHIAARRTGRRK</sequence>
<comment type="function">
    <text evidence="1">One of the primary rRNA binding proteins. Required for association of the 30S and 50S subunits to form the 70S ribosome, for tRNA binding and peptide bond formation. It has been suggested to have peptidyltransferase activity; this is somewhat controversial. Makes several contacts with the 16S rRNA in the 70S ribosome.</text>
</comment>
<comment type="subunit">
    <text evidence="1">Part of the 50S ribosomal subunit. Forms a bridge to the 30S subunit in the 70S ribosome.</text>
</comment>
<comment type="similarity">
    <text evidence="1">Belongs to the universal ribosomal protein uL2 family.</text>
</comment>
<keyword id="KW-0687">Ribonucleoprotein</keyword>
<keyword id="KW-0689">Ribosomal protein</keyword>
<keyword id="KW-0694">RNA-binding</keyword>
<keyword id="KW-0699">rRNA-binding</keyword>
<gene>
    <name evidence="1" type="primary">rpl2</name>
    <name type="ordered locus">PH1775</name>
</gene>
<accession>O59421</accession>
<evidence type="ECO:0000255" key="1">
    <source>
        <dbReference type="HAMAP-Rule" id="MF_01320"/>
    </source>
</evidence>
<evidence type="ECO:0000256" key="2">
    <source>
        <dbReference type="SAM" id="MobiDB-lite"/>
    </source>
</evidence>
<evidence type="ECO:0000305" key="3"/>
<feature type="chain" id="PRO_0000129724" description="Large ribosomal subunit protein uL2">
    <location>
        <begin position="1"/>
        <end position="239"/>
    </location>
</feature>
<feature type="region of interest" description="Disordered" evidence="2">
    <location>
        <begin position="1"/>
        <end position="20"/>
    </location>
</feature>
<feature type="region of interest" description="Disordered" evidence="2">
    <location>
        <begin position="203"/>
        <end position="239"/>
    </location>
</feature>
<feature type="compositionally biased region" description="Basic residues" evidence="2">
    <location>
        <begin position="222"/>
        <end position="239"/>
    </location>
</feature>
<organism>
    <name type="scientific">Pyrococcus horikoshii (strain ATCC 700860 / DSM 12428 / JCM 9974 / NBRC 100139 / OT-3)</name>
    <dbReference type="NCBI Taxonomy" id="70601"/>
    <lineage>
        <taxon>Archaea</taxon>
        <taxon>Methanobacteriati</taxon>
        <taxon>Methanobacteriota</taxon>
        <taxon>Thermococci</taxon>
        <taxon>Thermococcales</taxon>
        <taxon>Thermococcaceae</taxon>
        <taxon>Pyrococcus</taxon>
    </lineage>
</organism>
<proteinExistence type="inferred from homology"/>
<protein>
    <recommendedName>
        <fullName evidence="1">Large ribosomal subunit protein uL2</fullName>
    </recommendedName>
    <alternativeName>
        <fullName evidence="3">50S ribosomal protein L2</fullName>
    </alternativeName>
</protein>
<reference key="1">
    <citation type="journal article" date="1998" name="DNA Res.">
        <title>Complete sequence and gene organization of the genome of a hyper-thermophilic archaebacterium, Pyrococcus horikoshii OT3.</title>
        <authorList>
            <person name="Kawarabayasi Y."/>
            <person name="Sawada M."/>
            <person name="Horikawa H."/>
            <person name="Haikawa Y."/>
            <person name="Hino Y."/>
            <person name="Yamamoto S."/>
            <person name="Sekine M."/>
            <person name="Baba S."/>
            <person name="Kosugi H."/>
            <person name="Hosoyama A."/>
            <person name="Nagai Y."/>
            <person name="Sakai M."/>
            <person name="Ogura K."/>
            <person name="Otsuka R."/>
            <person name="Nakazawa H."/>
            <person name="Takamiya M."/>
            <person name="Ohfuku Y."/>
            <person name="Funahashi T."/>
            <person name="Tanaka T."/>
            <person name="Kudoh Y."/>
            <person name="Yamazaki J."/>
            <person name="Kushida N."/>
            <person name="Oguchi A."/>
            <person name="Aoki K."/>
            <person name="Yoshizawa T."/>
            <person name="Nakamura Y."/>
            <person name="Robb F.T."/>
            <person name="Horikoshi K."/>
            <person name="Masuchi Y."/>
            <person name="Shizuya H."/>
            <person name="Kikuchi H."/>
        </authorList>
    </citation>
    <scope>NUCLEOTIDE SEQUENCE [LARGE SCALE GENOMIC DNA]</scope>
    <source>
        <strain>ATCC 700860 / DSM 12428 / JCM 9974 / NBRC 100139 / OT-3</strain>
    </source>
</reference>
<name>RL2_PYRHO</name>
<dbReference type="EMBL" id="BA000001">
    <property type="protein sequence ID" value="BAA30891.1"/>
    <property type="molecule type" value="Genomic_DNA"/>
</dbReference>
<dbReference type="PIR" id="D71187">
    <property type="entry name" value="D71187"/>
</dbReference>
<dbReference type="RefSeq" id="WP_010885838.1">
    <property type="nucleotide sequence ID" value="NC_000961.1"/>
</dbReference>
<dbReference type="SMR" id="O59421"/>
<dbReference type="STRING" id="70601.gene:9378774"/>
<dbReference type="EnsemblBacteria" id="BAA30891">
    <property type="protein sequence ID" value="BAA30891"/>
    <property type="gene ID" value="BAA30891"/>
</dbReference>
<dbReference type="GeneID" id="1442620"/>
<dbReference type="KEGG" id="pho:PH1775"/>
<dbReference type="eggNOG" id="arCOG04067">
    <property type="taxonomic scope" value="Archaea"/>
</dbReference>
<dbReference type="OrthoDB" id="5987at2157"/>
<dbReference type="Proteomes" id="UP000000752">
    <property type="component" value="Chromosome"/>
</dbReference>
<dbReference type="GO" id="GO:0022625">
    <property type="term" value="C:cytosolic large ribosomal subunit"/>
    <property type="evidence" value="ECO:0007669"/>
    <property type="project" value="TreeGrafter"/>
</dbReference>
<dbReference type="GO" id="GO:0019843">
    <property type="term" value="F:rRNA binding"/>
    <property type="evidence" value="ECO:0007669"/>
    <property type="project" value="UniProtKB-UniRule"/>
</dbReference>
<dbReference type="GO" id="GO:0003735">
    <property type="term" value="F:structural constituent of ribosome"/>
    <property type="evidence" value="ECO:0007669"/>
    <property type="project" value="InterPro"/>
</dbReference>
<dbReference type="GO" id="GO:0002181">
    <property type="term" value="P:cytoplasmic translation"/>
    <property type="evidence" value="ECO:0007669"/>
    <property type="project" value="TreeGrafter"/>
</dbReference>
<dbReference type="FunFam" id="2.30.30.30:FF:000001">
    <property type="entry name" value="50S ribosomal protein L2"/>
    <property type="match status" value="1"/>
</dbReference>
<dbReference type="FunFam" id="2.40.50.140:FF:000020">
    <property type="entry name" value="60S ribosomal protein L2"/>
    <property type="match status" value="1"/>
</dbReference>
<dbReference type="FunFam" id="4.10.950.10:FF:000002">
    <property type="entry name" value="60S ribosomal protein L2"/>
    <property type="match status" value="1"/>
</dbReference>
<dbReference type="Gene3D" id="2.30.30.30">
    <property type="match status" value="1"/>
</dbReference>
<dbReference type="Gene3D" id="2.40.50.140">
    <property type="entry name" value="Nucleic acid-binding proteins"/>
    <property type="match status" value="1"/>
</dbReference>
<dbReference type="Gene3D" id="4.10.950.10">
    <property type="entry name" value="Ribosomal protein L2, domain 3"/>
    <property type="match status" value="1"/>
</dbReference>
<dbReference type="HAMAP" id="MF_01320_A">
    <property type="entry name" value="Ribosomal_uL2_A"/>
    <property type="match status" value="1"/>
</dbReference>
<dbReference type="InterPro" id="IPR012340">
    <property type="entry name" value="NA-bd_OB-fold"/>
</dbReference>
<dbReference type="InterPro" id="IPR014722">
    <property type="entry name" value="Rib_uL2_dom2"/>
</dbReference>
<dbReference type="InterPro" id="IPR002171">
    <property type="entry name" value="Ribosomal_uL2"/>
</dbReference>
<dbReference type="InterPro" id="IPR023672">
    <property type="entry name" value="Ribosomal_uL2_arc_euk"/>
</dbReference>
<dbReference type="InterPro" id="IPR022669">
    <property type="entry name" value="Ribosomal_uL2_C"/>
</dbReference>
<dbReference type="InterPro" id="IPR014726">
    <property type="entry name" value="Ribosomal_uL2_dom3"/>
</dbReference>
<dbReference type="InterPro" id="IPR022666">
    <property type="entry name" value="Ribosomal_uL2_RNA-bd_dom"/>
</dbReference>
<dbReference type="InterPro" id="IPR008991">
    <property type="entry name" value="Translation_prot_SH3-like_sf"/>
</dbReference>
<dbReference type="NCBIfam" id="NF007180">
    <property type="entry name" value="PRK09612.1"/>
    <property type="match status" value="1"/>
</dbReference>
<dbReference type="PANTHER" id="PTHR13691:SF16">
    <property type="entry name" value="LARGE RIBOSOMAL SUBUNIT PROTEIN UL2"/>
    <property type="match status" value="1"/>
</dbReference>
<dbReference type="PANTHER" id="PTHR13691">
    <property type="entry name" value="RIBOSOMAL PROTEIN L2"/>
    <property type="match status" value="1"/>
</dbReference>
<dbReference type="Pfam" id="PF00181">
    <property type="entry name" value="Ribosomal_L2"/>
    <property type="match status" value="1"/>
</dbReference>
<dbReference type="Pfam" id="PF03947">
    <property type="entry name" value="Ribosomal_L2_C"/>
    <property type="match status" value="1"/>
</dbReference>
<dbReference type="PIRSF" id="PIRSF002158">
    <property type="entry name" value="Ribosomal_L2"/>
    <property type="match status" value="1"/>
</dbReference>
<dbReference type="SMART" id="SM01383">
    <property type="entry name" value="Ribosomal_L2"/>
    <property type="match status" value="1"/>
</dbReference>
<dbReference type="SMART" id="SM01382">
    <property type="entry name" value="Ribosomal_L2_C"/>
    <property type="match status" value="1"/>
</dbReference>
<dbReference type="SUPFAM" id="SSF50249">
    <property type="entry name" value="Nucleic acid-binding proteins"/>
    <property type="match status" value="1"/>
</dbReference>
<dbReference type="SUPFAM" id="SSF50104">
    <property type="entry name" value="Translation proteins SH3-like domain"/>
    <property type="match status" value="1"/>
</dbReference>